<proteinExistence type="inferred from homology"/>
<dbReference type="EMBL" id="BX571866">
    <property type="protein sequence ID" value="CAE14470.1"/>
    <property type="molecule type" value="Genomic_DNA"/>
</dbReference>
<dbReference type="RefSeq" id="WP_011146431.1">
    <property type="nucleotide sequence ID" value="NC_005126.1"/>
</dbReference>
<dbReference type="SMR" id="Q7N4Y3"/>
<dbReference type="STRING" id="243265.plu2177"/>
<dbReference type="GeneID" id="48848455"/>
<dbReference type="KEGG" id="plu:plu2177"/>
<dbReference type="eggNOG" id="COG0829">
    <property type="taxonomic scope" value="Bacteria"/>
</dbReference>
<dbReference type="HOGENOM" id="CLU_056339_1_0_6"/>
<dbReference type="OrthoDB" id="9807968at2"/>
<dbReference type="Proteomes" id="UP000002514">
    <property type="component" value="Chromosome"/>
</dbReference>
<dbReference type="GO" id="GO:0005737">
    <property type="term" value="C:cytoplasm"/>
    <property type="evidence" value="ECO:0007669"/>
    <property type="project" value="UniProtKB-SubCell"/>
</dbReference>
<dbReference type="GO" id="GO:0016151">
    <property type="term" value="F:nickel cation binding"/>
    <property type="evidence" value="ECO:0007669"/>
    <property type="project" value="UniProtKB-UniRule"/>
</dbReference>
<dbReference type="HAMAP" id="MF_01384">
    <property type="entry name" value="UreD"/>
    <property type="match status" value="1"/>
</dbReference>
<dbReference type="InterPro" id="IPR002669">
    <property type="entry name" value="UreD"/>
</dbReference>
<dbReference type="PANTHER" id="PTHR33643">
    <property type="entry name" value="UREASE ACCESSORY PROTEIN D"/>
    <property type="match status" value="1"/>
</dbReference>
<dbReference type="PANTHER" id="PTHR33643:SF1">
    <property type="entry name" value="UREASE ACCESSORY PROTEIN D"/>
    <property type="match status" value="1"/>
</dbReference>
<dbReference type="Pfam" id="PF01774">
    <property type="entry name" value="UreD"/>
    <property type="match status" value="1"/>
</dbReference>
<sequence>MTSTRLPQNIGEACQQANNLGVNAPELARFQDEPPQMASGDVGKSGYLRLGFARRGDRSILAQMKRRVPYLVQRALYWDEALPQMPCVFMISTSGCILQGDRLALDIHVAPEAFGHVTTQSATKIHSMENNYAAQVQTIQIEQGGYLEMMPDPVIPHSGSRFITDTQITIHPTATLIYSEIIMSGRKYHLADQGFKFDVYSSRITATDFDGKILFTERYVLEPKKQSLNSVGVMGPFHVFGNVILLTPQLHHDRILARMAPQYDAETGIASGTSRLPHQCGLIFKVLGKETYQVKAGIRLFWRIAREEILGVTLPEPFIWR</sequence>
<comment type="function">
    <text evidence="1">Required for maturation of urease via the functional incorporation of the urease nickel metallocenter.</text>
</comment>
<comment type="subunit">
    <text evidence="1">UreD, UreF and UreG form a complex that acts as a GTP-hydrolysis-dependent molecular chaperone, activating the urease apoprotein by helping to assemble the nickel containing metallocenter of UreC. The UreE protein probably delivers the nickel.</text>
</comment>
<comment type="subcellular location">
    <subcellularLocation>
        <location evidence="1">Cytoplasm</location>
    </subcellularLocation>
</comment>
<comment type="similarity">
    <text evidence="1">Belongs to the UreD family.</text>
</comment>
<accession>Q7N4Y3</accession>
<feature type="chain" id="PRO_0000346585" description="Urease accessory protein UreD">
    <location>
        <begin position="1"/>
        <end position="321"/>
    </location>
</feature>
<evidence type="ECO:0000255" key="1">
    <source>
        <dbReference type="HAMAP-Rule" id="MF_01384"/>
    </source>
</evidence>
<organism>
    <name type="scientific">Photorhabdus laumondii subsp. laumondii (strain DSM 15139 / CIP 105565 / TT01)</name>
    <name type="common">Photorhabdus luminescens subsp. laumondii</name>
    <dbReference type="NCBI Taxonomy" id="243265"/>
    <lineage>
        <taxon>Bacteria</taxon>
        <taxon>Pseudomonadati</taxon>
        <taxon>Pseudomonadota</taxon>
        <taxon>Gammaproteobacteria</taxon>
        <taxon>Enterobacterales</taxon>
        <taxon>Morganellaceae</taxon>
        <taxon>Photorhabdus</taxon>
    </lineage>
</organism>
<reference key="1">
    <citation type="journal article" date="2003" name="Nat. Biotechnol.">
        <title>The genome sequence of the entomopathogenic bacterium Photorhabdus luminescens.</title>
        <authorList>
            <person name="Duchaud E."/>
            <person name="Rusniok C."/>
            <person name="Frangeul L."/>
            <person name="Buchrieser C."/>
            <person name="Givaudan A."/>
            <person name="Taourit S."/>
            <person name="Bocs S."/>
            <person name="Boursaux-Eude C."/>
            <person name="Chandler M."/>
            <person name="Charles J.-F."/>
            <person name="Dassa E."/>
            <person name="Derose R."/>
            <person name="Derzelle S."/>
            <person name="Freyssinet G."/>
            <person name="Gaudriault S."/>
            <person name="Medigue C."/>
            <person name="Lanois A."/>
            <person name="Powell K."/>
            <person name="Siguier P."/>
            <person name="Vincent R."/>
            <person name="Wingate V."/>
            <person name="Zouine M."/>
            <person name="Glaser P."/>
            <person name="Boemare N."/>
            <person name="Danchin A."/>
            <person name="Kunst F."/>
        </authorList>
    </citation>
    <scope>NUCLEOTIDE SEQUENCE [LARGE SCALE GENOMIC DNA]</scope>
    <source>
        <strain>DSM 15139 / CIP 105565 / TT01</strain>
    </source>
</reference>
<name>URED_PHOLL</name>
<keyword id="KW-0143">Chaperone</keyword>
<keyword id="KW-0963">Cytoplasm</keyword>
<keyword id="KW-0996">Nickel insertion</keyword>
<keyword id="KW-1185">Reference proteome</keyword>
<protein>
    <recommendedName>
        <fullName evidence="1">Urease accessory protein UreD</fullName>
    </recommendedName>
</protein>
<gene>
    <name evidence="1" type="primary">ureD</name>
    <name type="ordered locus">plu2177</name>
</gene>